<gene>
    <name type="primary">rps4</name>
</gene>
<accession>O36057</accession>
<reference key="1">
    <citation type="journal article" date="1997" name="Plant Syst. Evol.">
        <title>Phylogenetic analysis of Iridaceae with parsimony and distance methods using the plastid gene rps4.</title>
        <authorList>
            <person name="Souza-Chies T.T."/>
            <person name="Bittar G."/>
            <person name="Nadot S."/>
            <person name="Carter L."/>
            <person name="Besin E."/>
            <person name="Lejeune B.P."/>
        </authorList>
    </citation>
    <scope>NUCLEOTIDE SEQUENCE [GENOMIC DNA]</scope>
</reference>
<dbReference type="EMBL" id="Z68250">
    <property type="protein sequence ID" value="CAA92548.1"/>
    <property type="molecule type" value="Genomic_DNA"/>
</dbReference>
<dbReference type="SMR" id="O36057"/>
<dbReference type="GO" id="GO:0009507">
    <property type="term" value="C:chloroplast"/>
    <property type="evidence" value="ECO:0007669"/>
    <property type="project" value="UniProtKB-SubCell"/>
</dbReference>
<dbReference type="GO" id="GO:0015935">
    <property type="term" value="C:small ribosomal subunit"/>
    <property type="evidence" value="ECO:0007669"/>
    <property type="project" value="InterPro"/>
</dbReference>
<dbReference type="GO" id="GO:0019843">
    <property type="term" value="F:rRNA binding"/>
    <property type="evidence" value="ECO:0007669"/>
    <property type="project" value="UniProtKB-KW"/>
</dbReference>
<dbReference type="GO" id="GO:0003735">
    <property type="term" value="F:structural constituent of ribosome"/>
    <property type="evidence" value="ECO:0007669"/>
    <property type="project" value="InterPro"/>
</dbReference>
<dbReference type="GO" id="GO:0042274">
    <property type="term" value="P:ribosomal small subunit biogenesis"/>
    <property type="evidence" value="ECO:0007669"/>
    <property type="project" value="TreeGrafter"/>
</dbReference>
<dbReference type="GO" id="GO:0006412">
    <property type="term" value="P:translation"/>
    <property type="evidence" value="ECO:0007669"/>
    <property type="project" value="InterPro"/>
</dbReference>
<dbReference type="CDD" id="cd00165">
    <property type="entry name" value="S4"/>
    <property type="match status" value="1"/>
</dbReference>
<dbReference type="FunFam" id="1.10.1050.10:FF:000002">
    <property type="entry name" value="30S ribosomal protein S4, chloroplastic"/>
    <property type="match status" value="1"/>
</dbReference>
<dbReference type="FunFam" id="3.10.290.10:FF:000081">
    <property type="entry name" value="30S ribosomal protein S4, chloroplastic"/>
    <property type="match status" value="1"/>
</dbReference>
<dbReference type="Gene3D" id="1.10.1050.10">
    <property type="entry name" value="Ribosomal Protein S4 Delta 41, Chain A, domain 1"/>
    <property type="match status" value="1"/>
</dbReference>
<dbReference type="Gene3D" id="3.10.290.10">
    <property type="entry name" value="RNA-binding S4 domain"/>
    <property type="match status" value="1"/>
</dbReference>
<dbReference type="HAMAP" id="MF_01306_B">
    <property type="entry name" value="Ribosomal_uS4_B"/>
    <property type="match status" value="1"/>
</dbReference>
<dbReference type="InterPro" id="IPR022801">
    <property type="entry name" value="Ribosomal_uS4"/>
</dbReference>
<dbReference type="InterPro" id="IPR005709">
    <property type="entry name" value="Ribosomal_uS4_bac-type"/>
</dbReference>
<dbReference type="InterPro" id="IPR018079">
    <property type="entry name" value="Ribosomal_uS4_CS"/>
</dbReference>
<dbReference type="InterPro" id="IPR001912">
    <property type="entry name" value="Ribosomal_uS4_N"/>
</dbReference>
<dbReference type="InterPro" id="IPR002942">
    <property type="entry name" value="S4_RNA-bd"/>
</dbReference>
<dbReference type="InterPro" id="IPR036986">
    <property type="entry name" value="S4_RNA-bd_sf"/>
</dbReference>
<dbReference type="NCBIfam" id="NF003717">
    <property type="entry name" value="PRK05327.1"/>
    <property type="match status" value="1"/>
</dbReference>
<dbReference type="NCBIfam" id="TIGR01017">
    <property type="entry name" value="rpsD_bact"/>
    <property type="match status" value="1"/>
</dbReference>
<dbReference type="PANTHER" id="PTHR11831">
    <property type="entry name" value="30S 40S RIBOSOMAL PROTEIN"/>
    <property type="match status" value="1"/>
</dbReference>
<dbReference type="PANTHER" id="PTHR11831:SF4">
    <property type="entry name" value="SMALL RIBOSOMAL SUBUNIT PROTEIN US4M"/>
    <property type="match status" value="1"/>
</dbReference>
<dbReference type="Pfam" id="PF00163">
    <property type="entry name" value="Ribosomal_S4"/>
    <property type="match status" value="1"/>
</dbReference>
<dbReference type="Pfam" id="PF01479">
    <property type="entry name" value="S4"/>
    <property type="match status" value="1"/>
</dbReference>
<dbReference type="SMART" id="SM01390">
    <property type="entry name" value="Ribosomal_S4"/>
    <property type="match status" value="1"/>
</dbReference>
<dbReference type="SMART" id="SM00363">
    <property type="entry name" value="S4"/>
    <property type="match status" value="1"/>
</dbReference>
<dbReference type="SUPFAM" id="SSF55174">
    <property type="entry name" value="Alpha-L RNA-binding motif"/>
    <property type="match status" value="1"/>
</dbReference>
<dbReference type="PROSITE" id="PS00632">
    <property type="entry name" value="RIBOSOMAL_S4"/>
    <property type="match status" value="1"/>
</dbReference>
<dbReference type="PROSITE" id="PS50889">
    <property type="entry name" value="S4"/>
    <property type="match status" value="1"/>
</dbReference>
<comment type="function">
    <text evidence="1">One of the primary rRNA binding proteins, it binds directly to 16S rRNA where it nucleates assembly of the body of the 30S subunit.</text>
</comment>
<comment type="function">
    <text evidence="1">With S5 and S12 plays an important role in translational accuracy.</text>
</comment>
<comment type="subunit">
    <text evidence="1">Part of the 30S ribosomal subunit. Contacts protein S5. The interaction surface between S4 and S5 is involved in control of translational fidelity (By similarity).</text>
</comment>
<comment type="subcellular location">
    <subcellularLocation>
        <location>Plastid</location>
        <location>Chloroplast</location>
    </subcellularLocation>
</comment>
<comment type="similarity">
    <text evidence="2">Belongs to the universal ribosomal protein uS4 family.</text>
</comment>
<protein>
    <recommendedName>
        <fullName evidence="2">Small ribosomal subunit protein uS4c</fullName>
    </recommendedName>
    <alternativeName>
        <fullName>30S ribosomal protein S4, chloroplastic</fullName>
    </alternativeName>
</protein>
<proteinExistence type="inferred from homology"/>
<evidence type="ECO:0000250" key="1"/>
<evidence type="ECO:0000305" key="2"/>
<sequence>RFKKIRRLGALPGLTSKRPRSGIDLKNQLRSGKRSQYRIRLEEKQKLRFHYGLTERQLLKYVHIAGKAKGSTGQVLLQLLEMRLDNILFRLGMASTIPGARQLVNHRHILVNGRIVDIPSYRCKPRDIITTKDKERSKVLIQNYIASSPHEELPNHLTIDPLQYKGLVNQIIDSKWIGLKIN</sequence>
<organism>
    <name type="scientific">Tigridia sp. (strain Lejeune 1997)</name>
    <dbReference type="NCBI Taxonomy" id="58977"/>
    <lineage>
        <taxon>Eukaryota</taxon>
        <taxon>Viridiplantae</taxon>
        <taxon>Streptophyta</taxon>
        <taxon>Embryophyta</taxon>
        <taxon>Tracheophyta</taxon>
        <taxon>Spermatophyta</taxon>
        <taxon>Magnoliopsida</taxon>
        <taxon>Liliopsida</taxon>
        <taxon>Asparagales</taxon>
        <taxon>Iridaceae</taxon>
        <taxon>Iridoideae</taxon>
        <taxon>Tigridieae</taxon>
        <taxon>Tigridia</taxon>
    </lineage>
</organism>
<keyword id="KW-0150">Chloroplast</keyword>
<keyword id="KW-0934">Plastid</keyword>
<keyword id="KW-0687">Ribonucleoprotein</keyword>
<keyword id="KW-0689">Ribosomal protein</keyword>
<keyword id="KW-0694">RNA-binding</keyword>
<keyword id="KW-0699">rRNA-binding</keyword>
<name>RR4_TIGSP</name>
<geneLocation type="chloroplast"/>
<feature type="chain" id="PRO_0000132673" description="Small ribosomal subunit protein uS4c">
    <location>
        <begin position="1" status="less than"/>
        <end position="182" status="greater than"/>
    </location>
</feature>
<feature type="domain" description="S4 RNA-binding">
    <location>
        <begin position="82"/>
        <end position="143"/>
    </location>
</feature>
<feature type="non-terminal residue">
    <location>
        <position position="1"/>
    </location>
</feature>
<feature type="non-terminal residue">
    <location>
        <position position="182"/>
    </location>
</feature>